<name>WDR33_MOUSE</name>
<organism>
    <name type="scientific">Mus musculus</name>
    <name type="common">Mouse</name>
    <dbReference type="NCBI Taxonomy" id="10090"/>
    <lineage>
        <taxon>Eukaryota</taxon>
        <taxon>Metazoa</taxon>
        <taxon>Chordata</taxon>
        <taxon>Craniata</taxon>
        <taxon>Vertebrata</taxon>
        <taxon>Euteleostomi</taxon>
        <taxon>Mammalia</taxon>
        <taxon>Eutheria</taxon>
        <taxon>Euarchontoglires</taxon>
        <taxon>Glires</taxon>
        <taxon>Rodentia</taxon>
        <taxon>Myomorpha</taxon>
        <taxon>Muroidea</taxon>
        <taxon>Muridae</taxon>
        <taxon>Murinae</taxon>
        <taxon>Mus</taxon>
        <taxon>Mus</taxon>
    </lineage>
</organism>
<sequence length="1330" mass="145267">MATEIGSPPRFFHMPRFQHQAPRQLFYKRPDFAQQQAMQQLTFDGKRMRKAVNRKTIDYNPSVIKYLENRIWQRDQRDMRAIQPDAGYYNDLVPPIGMLNNPMNAVTTKFVRTSTNKVKCPVFVVRWTPEGRRLVTGASSGEFTLWNGLTFNFETILQAHDSPVRAMTWSHNDMWMLTADHGGYVKYWQSNMNNVKMFQAHKEAIREASFSPTDNKFATCSDDGTVRIWDFLRCHEERILRGHGADVKCVDWHPTKGLVVSGSKDSQQPIKFWDPKTGQSLATLHAHKNTVMEVKLNLNGNWLLTASRDHLCKLFDIRNLKEELQVFRGHKKEATAVAWHPVHEGLFASGGSDGSLLFWHVGVEKEVGGMEMAHEGMIWSLAWHPLGHILCSGSNDHTSKFWTRNRPGDKMRDRYNLNLLPGMSEDGVEYDDLEPNSLAVIPGMGIPEQLKLAMEQEQMGKDESSEIEMTIPGLDWGMEEVMQKDQKKVPQKKVPYAKPIPAQFQQAWMQNKVPIPAPNEVLNDRKEDIKLEEKKKTQAEIEQEMATLQYTNPQLLEQLKIERLAQKQADQIQPPPSSGTPLLGPQPFSGQGPISQIPQGFQQPHPSQQMPLVPQMGPPGPQGQFRAPGPQGQMGPQGPPMHQGGGGPQGFMGPQGPQGPPQGLPRPQDMHGPQGMQRHPGPHGPLGPQGPPGPQGSSGPQGHMGPQGPPGPQGHIGPQGPPASQGHMGPQGPPGTQGMQGPPGPRGMQGPPHPHGIQGGPASQGIQGPLMGLNPRGMQGPPGPRENQGPAPQGLMIGHPPQEMRGPHPPSGLLGHGPQEMRGPQEMRGMQGPPPQGSMLGPPQELRGPSGSQGQQGPPQGSLGPPPQGGMQGPPGPQGQQNPARGPHPSQGPIPFQQQKAPLLGDGPRAPFNQEGQSTGPPPLIPGLGQQGAQGRIPPLNPGQGPGPNKGDTRGPPNHHLGPMSERRHEQSGGPEHGPDRGPFRGGQDCRGPPDRRGSHPDFPDDFRPDDFHPDKRFGHRLREFEGRGGPLPQEEKWRRGGPGPPFPPDHREFNEGDGRGAARGPPGAWEGRRPGDDRFPRDPDDPRFRGRREESFRRGAPPRHEGRAPPRGRDNFPGPDDFGPEEGFDASDEAARGRDLRGRGRGTPRGGSRKCLLPTPDEFPRFEGGRKPDSWDGNREPGPGHEHFRDAPRPDHPPHDGHSPASRERSSSLQGMDMASLPPRKRPWHDGSGTSEHREMEAQGGPSEDRGSKGRGGPGPSQRVPKSGRSSSLDGDHHDGYHRDEPFGGPPGSSSSSRGARSGSNWGRGSNMNSGPPRRGTSRGSGRGR</sequence>
<accession>Q8K4P0</accession>
<accession>Q8C7C6</accession>
<accession>Q8CD02</accession>
<proteinExistence type="evidence at protein level"/>
<keyword id="KW-0007">Acetylation</keyword>
<keyword id="KW-0176">Collagen</keyword>
<keyword id="KW-1017">Isopeptide bond</keyword>
<keyword id="KW-0488">Methylation</keyword>
<keyword id="KW-0507">mRNA processing</keyword>
<keyword id="KW-0539">Nucleus</keyword>
<keyword id="KW-0597">Phosphoprotein</keyword>
<keyword id="KW-1185">Reference proteome</keyword>
<keyword id="KW-0677">Repeat</keyword>
<keyword id="KW-0832">Ubl conjugation</keyword>
<keyword id="KW-0853">WD repeat</keyword>
<dbReference type="EMBL" id="AB086191">
    <property type="protein sequence ID" value="BAC00776.1"/>
    <property type="molecule type" value="mRNA"/>
</dbReference>
<dbReference type="EMBL" id="AK031786">
    <property type="protein sequence ID" value="BAC27549.1"/>
    <property type="molecule type" value="mRNA"/>
</dbReference>
<dbReference type="EMBL" id="AK050653">
    <property type="protein sequence ID" value="BAC34364.1"/>
    <property type="molecule type" value="mRNA"/>
</dbReference>
<dbReference type="EMBL" id="AC124393">
    <property type="status" value="NOT_ANNOTATED_CDS"/>
    <property type="molecule type" value="Genomic_DNA"/>
</dbReference>
<dbReference type="EMBL" id="AC131761">
    <property type="status" value="NOT_ANNOTATED_CDS"/>
    <property type="molecule type" value="Genomic_DNA"/>
</dbReference>
<dbReference type="EMBL" id="AC161511">
    <property type="status" value="NOT_ANNOTATED_CDS"/>
    <property type="molecule type" value="Genomic_DNA"/>
</dbReference>
<dbReference type="CCDS" id="CCDS29112.1"/>
<dbReference type="RefSeq" id="NP_083142.2">
    <property type="nucleotide sequence ID" value="NM_028866.3"/>
</dbReference>
<dbReference type="SMR" id="Q8K4P0"/>
<dbReference type="BioGRID" id="216664">
    <property type="interactions" value="5"/>
</dbReference>
<dbReference type="FunCoup" id="Q8K4P0">
    <property type="interactions" value="5106"/>
</dbReference>
<dbReference type="IntAct" id="Q8K4P0">
    <property type="interactions" value="2"/>
</dbReference>
<dbReference type="MINT" id="Q8K4P0"/>
<dbReference type="STRING" id="10090.ENSMUSP00000025264"/>
<dbReference type="iPTMnet" id="Q8K4P0"/>
<dbReference type="PhosphoSitePlus" id="Q8K4P0"/>
<dbReference type="jPOST" id="Q8K4P0"/>
<dbReference type="PaxDb" id="10090-ENSMUSP00000025264"/>
<dbReference type="PeptideAtlas" id="Q8K4P0"/>
<dbReference type="ProteomicsDB" id="297844"/>
<dbReference type="Pumba" id="Q8K4P0"/>
<dbReference type="Antibodypedia" id="18487">
    <property type="antibodies" value="105 antibodies from 20 providers"/>
</dbReference>
<dbReference type="DNASU" id="74320"/>
<dbReference type="Ensembl" id="ENSMUST00000025264.8">
    <property type="protein sequence ID" value="ENSMUSP00000025264.7"/>
    <property type="gene ID" value="ENSMUSG00000024400.17"/>
</dbReference>
<dbReference type="GeneID" id="74320"/>
<dbReference type="KEGG" id="mmu:74320"/>
<dbReference type="UCSC" id="uc008eis.2">
    <property type="organism name" value="mouse"/>
</dbReference>
<dbReference type="AGR" id="MGI:1921570"/>
<dbReference type="CTD" id="55339"/>
<dbReference type="MGI" id="MGI:1921570">
    <property type="gene designation" value="Wdr33"/>
</dbReference>
<dbReference type="VEuPathDB" id="HostDB:ENSMUSG00000024400"/>
<dbReference type="eggNOG" id="KOG0284">
    <property type="taxonomic scope" value="Eukaryota"/>
</dbReference>
<dbReference type="GeneTree" id="ENSGT00730000111130"/>
<dbReference type="HOGENOM" id="CLU_000288_77_3_1"/>
<dbReference type="InParanoid" id="Q8K4P0"/>
<dbReference type="OMA" id="RRHEQNS"/>
<dbReference type="OrthoDB" id="16717at2759"/>
<dbReference type="PhylomeDB" id="Q8K4P0"/>
<dbReference type="TreeFam" id="TF317659"/>
<dbReference type="Reactome" id="R-MMU-159231">
    <property type="pathway name" value="Transport of Mature mRNA Derived from an Intronless Transcript"/>
</dbReference>
<dbReference type="Reactome" id="R-MMU-72187">
    <property type="pathway name" value="mRNA 3'-end processing"/>
</dbReference>
<dbReference type="Reactome" id="R-MMU-72203">
    <property type="pathway name" value="Processing of Capped Intron-Containing Pre-mRNA"/>
</dbReference>
<dbReference type="Reactome" id="R-MMU-73856">
    <property type="pathway name" value="RNA Polymerase II Transcription Termination"/>
</dbReference>
<dbReference type="Reactome" id="R-MMU-77595">
    <property type="pathway name" value="Processing of Intronless Pre-mRNAs"/>
</dbReference>
<dbReference type="BioGRID-ORCS" id="74320">
    <property type="hits" value="27 hits in 75 CRISPR screens"/>
</dbReference>
<dbReference type="ChiTaRS" id="Wdr33">
    <property type="organism name" value="mouse"/>
</dbReference>
<dbReference type="PRO" id="PR:Q8K4P0"/>
<dbReference type="Proteomes" id="UP000000589">
    <property type="component" value="Chromosome 18"/>
</dbReference>
<dbReference type="RNAct" id="Q8K4P0">
    <property type="molecule type" value="protein"/>
</dbReference>
<dbReference type="Bgee" id="ENSMUSG00000024400">
    <property type="expression patterns" value="Expressed in ear vesicle and 258 other cell types or tissues"/>
</dbReference>
<dbReference type="ExpressionAtlas" id="Q8K4P0">
    <property type="expression patterns" value="baseline and differential"/>
</dbReference>
<dbReference type="GO" id="GO:0005581">
    <property type="term" value="C:collagen trimer"/>
    <property type="evidence" value="ECO:0007669"/>
    <property type="project" value="UniProtKB-KW"/>
</dbReference>
<dbReference type="GO" id="GO:0001650">
    <property type="term" value="C:fibrillar center"/>
    <property type="evidence" value="ECO:0007669"/>
    <property type="project" value="Ensembl"/>
</dbReference>
<dbReference type="GO" id="GO:0005654">
    <property type="term" value="C:nucleoplasm"/>
    <property type="evidence" value="ECO:0007669"/>
    <property type="project" value="Ensembl"/>
</dbReference>
<dbReference type="GO" id="GO:0005634">
    <property type="term" value="C:nucleus"/>
    <property type="evidence" value="ECO:0000314"/>
    <property type="project" value="MGI"/>
</dbReference>
<dbReference type="GO" id="GO:0031124">
    <property type="term" value="P:mRNA 3'-end processing"/>
    <property type="evidence" value="ECO:0007669"/>
    <property type="project" value="InterPro"/>
</dbReference>
<dbReference type="CDD" id="cd00200">
    <property type="entry name" value="WD40"/>
    <property type="match status" value="1"/>
</dbReference>
<dbReference type="FunFam" id="2.130.10.10:FF:000069">
    <property type="entry name" value="WD repeat domain 33"/>
    <property type="match status" value="1"/>
</dbReference>
<dbReference type="FunFam" id="2.130.10.10:FF:000077">
    <property type="entry name" value="WD repeat domain 33"/>
    <property type="match status" value="1"/>
</dbReference>
<dbReference type="FunFam" id="2.130.10.10:FF:000085">
    <property type="entry name" value="WD repeat domain 33"/>
    <property type="match status" value="1"/>
</dbReference>
<dbReference type="Gene3D" id="2.130.10.10">
    <property type="entry name" value="YVTN repeat-like/Quinoprotein amine dehydrogenase"/>
    <property type="match status" value="3"/>
</dbReference>
<dbReference type="InterPro" id="IPR045245">
    <property type="entry name" value="Pfs2-like"/>
</dbReference>
<dbReference type="InterPro" id="IPR015943">
    <property type="entry name" value="WD40/YVTN_repeat-like_dom_sf"/>
</dbReference>
<dbReference type="InterPro" id="IPR036322">
    <property type="entry name" value="WD40_repeat_dom_sf"/>
</dbReference>
<dbReference type="InterPro" id="IPR001680">
    <property type="entry name" value="WD40_rpt"/>
</dbReference>
<dbReference type="PANTHER" id="PTHR22836:SF0">
    <property type="entry name" value="PRE-MRNA 3' END PROCESSING PROTEIN WDR33"/>
    <property type="match status" value="1"/>
</dbReference>
<dbReference type="PANTHER" id="PTHR22836">
    <property type="entry name" value="WD40 REPEAT PROTEIN"/>
    <property type="match status" value="1"/>
</dbReference>
<dbReference type="Pfam" id="PF00400">
    <property type="entry name" value="WD40"/>
    <property type="match status" value="6"/>
</dbReference>
<dbReference type="SMART" id="SM00320">
    <property type="entry name" value="WD40"/>
    <property type="match status" value="7"/>
</dbReference>
<dbReference type="SUPFAM" id="SSF50978">
    <property type="entry name" value="WD40 repeat-like"/>
    <property type="match status" value="1"/>
</dbReference>
<dbReference type="PROSITE" id="PS50082">
    <property type="entry name" value="WD_REPEATS_2"/>
    <property type="match status" value="6"/>
</dbReference>
<dbReference type="PROSITE" id="PS50294">
    <property type="entry name" value="WD_REPEATS_REGION"/>
    <property type="match status" value="1"/>
</dbReference>
<protein>
    <recommendedName>
        <fullName>pre-mRNA 3' end processing protein WDR33</fullName>
    </recommendedName>
    <alternativeName>
        <fullName>WD repeat-containing protein 33</fullName>
    </alternativeName>
    <alternativeName>
        <fullName evidence="5">WD repeat-containing protein of 146 kDa</fullName>
    </alternativeName>
</protein>
<feature type="initiator methionine" description="Removed" evidence="2">
    <location>
        <position position="1"/>
    </location>
</feature>
<feature type="chain" id="PRO_0000415291" description="pre-mRNA 3' end processing protein WDR33">
    <location>
        <begin position="2"/>
        <end position="1330"/>
    </location>
</feature>
<feature type="repeat" description="WD 1">
    <location>
        <begin position="117"/>
        <end position="156"/>
    </location>
</feature>
<feature type="repeat" description="WD 2">
    <location>
        <begin position="159"/>
        <end position="198"/>
    </location>
</feature>
<feature type="repeat" description="WD 3">
    <location>
        <begin position="200"/>
        <end position="239"/>
    </location>
</feature>
<feature type="repeat" description="WD 4">
    <location>
        <begin position="242"/>
        <end position="283"/>
    </location>
</feature>
<feature type="repeat" description="WD 5">
    <location>
        <begin position="286"/>
        <end position="325"/>
    </location>
</feature>
<feature type="repeat" description="WD 6">
    <location>
        <begin position="329"/>
        <end position="369"/>
    </location>
</feature>
<feature type="repeat" description="WD 7">
    <location>
        <begin position="373"/>
        <end position="412"/>
    </location>
</feature>
<feature type="domain" description="Collagen-like">
    <location>
        <begin position="617"/>
        <end position="769"/>
    </location>
</feature>
<feature type="region of interest" description="Disordered" evidence="3">
    <location>
        <begin position="566"/>
        <end position="1330"/>
    </location>
</feature>
<feature type="compositionally biased region" description="Polar residues" evidence="3">
    <location>
        <begin position="588"/>
        <end position="607"/>
    </location>
</feature>
<feature type="compositionally biased region" description="Low complexity" evidence="3">
    <location>
        <begin position="622"/>
        <end position="642"/>
    </location>
</feature>
<feature type="compositionally biased region" description="Pro residues" evidence="3">
    <location>
        <begin position="682"/>
        <end position="694"/>
    </location>
</feature>
<feature type="compositionally biased region" description="Low complexity" evidence="3">
    <location>
        <begin position="695"/>
        <end position="706"/>
    </location>
</feature>
<feature type="compositionally biased region" description="Low complexity" evidence="3">
    <location>
        <begin position="725"/>
        <end position="750"/>
    </location>
</feature>
<feature type="compositionally biased region" description="Low complexity" evidence="3">
    <location>
        <begin position="848"/>
        <end position="863"/>
    </location>
</feature>
<feature type="compositionally biased region" description="Low complexity" evidence="3">
    <location>
        <begin position="926"/>
        <end position="935"/>
    </location>
</feature>
<feature type="compositionally biased region" description="Basic and acidic residues" evidence="3">
    <location>
        <begin position="965"/>
        <end position="983"/>
    </location>
</feature>
<feature type="compositionally biased region" description="Basic and acidic residues" evidence="3">
    <location>
        <begin position="992"/>
        <end position="1027"/>
    </location>
</feature>
<feature type="compositionally biased region" description="Basic and acidic residues" evidence="3">
    <location>
        <begin position="1049"/>
        <end position="1061"/>
    </location>
</feature>
<feature type="compositionally biased region" description="Basic and acidic residues" evidence="3">
    <location>
        <begin position="1071"/>
        <end position="1115"/>
    </location>
</feature>
<feature type="compositionally biased region" description="Acidic residues" evidence="3">
    <location>
        <begin position="1123"/>
        <end position="1133"/>
    </location>
</feature>
<feature type="compositionally biased region" description="Basic and acidic residues" evidence="3">
    <location>
        <begin position="1134"/>
        <end position="1143"/>
    </location>
</feature>
<feature type="compositionally biased region" description="Basic and acidic residues" evidence="3">
    <location>
        <begin position="1163"/>
        <end position="1211"/>
    </location>
</feature>
<feature type="compositionally biased region" description="Basic and acidic residues" evidence="3">
    <location>
        <begin position="1236"/>
        <end position="1253"/>
    </location>
</feature>
<feature type="compositionally biased region" description="Basic and acidic residues" evidence="3">
    <location>
        <begin position="1275"/>
        <end position="1287"/>
    </location>
</feature>
<feature type="compositionally biased region" description="Low complexity" evidence="3">
    <location>
        <begin position="1293"/>
        <end position="1323"/>
    </location>
</feature>
<feature type="modified residue" description="N-acetylalanine" evidence="2">
    <location>
        <position position="2"/>
    </location>
</feature>
<feature type="modified residue" description="Phosphoserine" evidence="2">
    <location>
        <position position="7"/>
    </location>
</feature>
<feature type="modified residue" description="N6-acetyllysine" evidence="7">
    <location>
        <position position="46"/>
    </location>
</feature>
<feature type="modified residue" description="Omega-N-methylarginine" evidence="2">
    <location>
        <position position="776"/>
    </location>
</feature>
<feature type="modified residue" description="Asymmetric dimethylarginine" evidence="8">
    <location>
        <position position="909"/>
    </location>
</feature>
<feature type="modified residue" description="Omega-N-methylarginine" evidence="8">
    <location>
        <position position="981"/>
    </location>
</feature>
<feature type="modified residue" description="Omega-N-methylarginine" evidence="8">
    <location>
        <position position="1028"/>
    </location>
</feature>
<feature type="modified residue" description="Phosphoserine" evidence="2">
    <location>
        <position position="1204"/>
    </location>
</feature>
<feature type="modified residue" description="Omega-N-methylarginine" evidence="8">
    <location>
        <position position="1256"/>
    </location>
</feature>
<feature type="modified residue" description="Asymmetric dimethylarginine; alternate" evidence="8">
    <location>
        <position position="1309"/>
    </location>
</feature>
<feature type="modified residue" description="Omega-N-methylarginine; alternate" evidence="8">
    <location>
        <position position="1309"/>
    </location>
</feature>
<feature type="cross-link" description="Glycyl lysine isopeptide (Lys-Gly) (interchain with G-Cter in SUMO2)" evidence="2">
    <location>
        <position position="526"/>
    </location>
</feature>
<feature type="cross-link" description="Glycyl lysine isopeptide (Lys-Gly) (interchain with G-Cter in SUMO2)" evidence="2">
    <location>
        <position position="530"/>
    </location>
</feature>
<feature type="cross-link" description="Glycyl lysine isopeptide (Lys-Gly) (interchain with G-Cter in SUMO2)" evidence="2">
    <location>
        <position position="560"/>
    </location>
</feature>
<evidence type="ECO:0000250" key="1"/>
<evidence type="ECO:0000250" key="2">
    <source>
        <dbReference type="UniProtKB" id="Q9C0J8"/>
    </source>
</evidence>
<evidence type="ECO:0000256" key="3">
    <source>
        <dbReference type="SAM" id="MobiDB-lite"/>
    </source>
</evidence>
<evidence type="ECO:0000269" key="4">
    <source>
    </source>
</evidence>
<evidence type="ECO:0000303" key="5">
    <source>
    </source>
</evidence>
<evidence type="ECO:0000305" key="6"/>
<evidence type="ECO:0007744" key="7">
    <source>
    </source>
</evidence>
<evidence type="ECO:0007744" key="8">
    <source>
    </source>
</evidence>
<reference key="1">
    <citation type="journal article" date="2001" name="Biochem. Biophys. Res. Commun.">
        <title>A novel WD40 repeat protein, WDC146, highly expressed during spermatogenesis in a stage-specific manner.</title>
        <authorList>
            <person name="Ito S."/>
            <person name="Sakai A."/>
            <person name="Nomura T."/>
            <person name="Miki Y."/>
            <person name="Ouchida M."/>
            <person name="Sasaki J."/>
            <person name="Shimizu K."/>
        </authorList>
    </citation>
    <scope>NUCLEOTIDE SEQUENCE [MRNA]</scope>
    <scope>SUBCELLULAR LOCATION</scope>
    <scope>TISSUE SPECIFICITY</scope>
</reference>
<reference key="2">
    <citation type="journal article" date="2005" name="Science">
        <title>The transcriptional landscape of the mammalian genome.</title>
        <authorList>
            <person name="Carninci P."/>
            <person name="Kasukawa T."/>
            <person name="Katayama S."/>
            <person name="Gough J."/>
            <person name="Frith M.C."/>
            <person name="Maeda N."/>
            <person name="Oyama R."/>
            <person name="Ravasi T."/>
            <person name="Lenhard B."/>
            <person name="Wells C."/>
            <person name="Kodzius R."/>
            <person name="Shimokawa K."/>
            <person name="Bajic V.B."/>
            <person name="Brenner S.E."/>
            <person name="Batalov S."/>
            <person name="Forrest A.R."/>
            <person name="Zavolan M."/>
            <person name="Davis M.J."/>
            <person name="Wilming L.G."/>
            <person name="Aidinis V."/>
            <person name="Allen J.E."/>
            <person name="Ambesi-Impiombato A."/>
            <person name="Apweiler R."/>
            <person name="Aturaliya R.N."/>
            <person name="Bailey T.L."/>
            <person name="Bansal M."/>
            <person name="Baxter L."/>
            <person name="Beisel K.W."/>
            <person name="Bersano T."/>
            <person name="Bono H."/>
            <person name="Chalk A.M."/>
            <person name="Chiu K.P."/>
            <person name="Choudhary V."/>
            <person name="Christoffels A."/>
            <person name="Clutterbuck D.R."/>
            <person name="Crowe M.L."/>
            <person name="Dalla E."/>
            <person name="Dalrymple B.P."/>
            <person name="de Bono B."/>
            <person name="Della Gatta G."/>
            <person name="di Bernardo D."/>
            <person name="Down T."/>
            <person name="Engstrom P."/>
            <person name="Fagiolini M."/>
            <person name="Faulkner G."/>
            <person name="Fletcher C.F."/>
            <person name="Fukushima T."/>
            <person name="Furuno M."/>
            <person name="Futaki S."/>
            <person name="Gariboldi M."/>
            <person name="Georgii-Hemming P."/>
            <person name="Gingeras T.R."/>
            <person name="Gojobori T."/>
            <person name="Green R.E."/>
            <person name="Gustincich S."/>
            <person name="Harbers M."/>
            <person name="Hayashi Y."/>
            <person name="Hensch T.K."/>
            <person name="Hirokawa N."/>
            <person name="Hill D."/>
            <person name="Huminiecki L."/>
            <person name="Iacono M."/>
            <person name="Ikeo K."/>
            <person name="Iwama A."/>
            <person name="Ishikawa T."/>
            <person name="Jakt M."/>
            <person name="Kanapin A."/>
            <person name="Katoh M."/>
            <person name="Kawasawa Y."/>
            <person name="Kelso J."/>
            <person name="Kitamura H."/>
            <person name="Kitano H."/>
            <person name="Kollias G."/>
            <person name="Krishnan S.P."/>
            <person name="Kruger A."/>
            <person name="Kummerfeld S.K."/>
            <person name="Kurochkin I.V."/>
            <person name="Lareau L.F."/>
            <person name="Lazarevic D."/>
            <person name="Lipovich L."/>
            <person name="Liu J."/>
            <person name="Liuni S."/>
            <person name="McWilliam S."/>
            <person name="Madan Babu M."/>
            <person name="Madera M."/>
            <person name="Marchionni L."/>
            <person name="Matsuda H."/>
            <person name="Matsuzawa S."/>
            <person name="Miki H."/>
            <person name="Mignone F."/>
            <person name="Miyake S."/>
            <person name="Morris K."/>
            <person name="Mottagui-Tabar S."/>
            <person name="Mulder N."/>
            <person name="Nakano N."/>
            <person name="Nakauchi H."/>
            <person name="Ng P."/>
            <person name="Nilsson R."/>
            <person name="Nishiguchi S."/>
            <person name="Nishikawa S."/>
            <person name="Nori F."/>
            <person name="Ohara O."/>
            <person name="Okazaki Y."/>
            <person name="Orlando V."/>
            <person name="Pang K.C."/>
            <person name="Pavan W.J."/>
            <person name="Pavesi G."/>
            <person name="Pesole G."/>
            <person name="Petrovsky N."/>
            <person name="Piazza S."/>
            <person name="Reed J."/>
            <person name="Reid J.F."/>
            <person name="Ring B.Z."/>
            <person name="Ringwald M."/>
            <person name="Rost B."/>
            <person name="Ruan Y."/>
            <person name="Salzberg S.L."/>
            <person name="Sandelin A."/>
            <person name="Schneider C."/>
            <person name="Schoenbach C."/>
            <person name="Sekiguchi K."/>
            <person name="Semple C.A."/>
            <person name="Seno S."/>
            <person name="Sessa L."/>
            <person name="Sheng Y."/>
            <person name="Shibata Y."/>
            <person name="Shimada H."/>
            <person name="Shimada K."/>
            <person name="Silva D."/>
            <person name="Sinclair B."/>
            <person name="Sperling S."/>
            <person name="Stupka E."/>
            <person name="Sugiura K."/>
            <person name="Sultana R."/>
            <person name="Takenaka Y."/>
            <person name="Taki K."/>
            <person name="Tammoja K."/>
            <person name="Tan S.L."/>
            <person name="Tang S."/>
            <person name="Taylor M.S."/>
            <person name="Tegner J."/>
            <person name="Teichmann S.A."/>
            <person name="Ueda H.R."/>
            <person name="van Nimwegen E."/>
            <person name="Verardo R."/>
            <person name="Wei C.L."/>
            <person name="Yagi K."/>
            <person name="Yamanishi H."/>
            <person name="Zabarovsky E."/>
            <person name="Zhu S."/>
            <person name="Zimmer A."/>
            <person name="Hide W."/>
            <person name="Bult C."/>
            <person name="Grimmond S.M."/>
            <person name="Teasdale R.D."/>
            <person name="Liu E.T."/>
            <person name="Brusic V."/>
            <person name="Quackenbush J."/>
            <person name="Wahlestedt C."/>
            <person name="Mattick J.S."/>
            <person name="Hume D.A."/>
            <person name="Kai C."/>
            <person name="Sasaki D."/>
            <person name="Tomaru Y."/>
            <person name="Fukuda S."/>
            <person name="Kanamori-Katayama M."/>
            <person name="Suzuki M."/>
            <person name="Aoki J."/>
            <person name="Arakawa T."/>
            <person name="Iida J."/>
            <person name="Imamura K."/>
            <person name="Itoh M."/>
            <person name="Kato T."/>
            <person name="Kawaji H."/>
            <person name="Kawagashira N."/>
            <person name="Kawashima T."/>
            <person name="Kojima M."/>
            <person name="Kondo S."/>
            <person name="Konno H."/>
            <person name="Nakano K."/>
            <person name="Ninomiya N."/>
            <person name="Nishio T."/>
            <person name="Okada M."/>
            <person name="Plessy C."/>
            <person name="Shibata K."/>
            <person name="Shiraki T."/>
            <person name="Suzuki S."/>
            <person name="Tagami M."/>
            <person name="Waki K."/>
            <person name="Watahiki A."/>
            <person name="Okamura-Oho Y."/>
            <person name="Suzuki H."/>
            <person name="Kawai J."/>
            <person name="Hayashizaki Y."/>
        </authorList>
    </citation>
    <scope>NUCLEOTIDE SEQUENCE [LARGE SCALE MRNA]</scope>
    <source>
        <strain>C57BL/6J</strain>
        <tissue>Head</tissue>
        <tissue>Thymus</tissue>
    </source>
</reference>
<reference key="3">
    <citation type="journal article" date="2009" name="PLoS Biol.">
        <title>Lineage-specific biology revealed by a finished genome assembly of the mouse.</title>
        <authorList>
            <person name="Church D.M."/>
            <person name="Goodstadt L."/>
            <person name="Hillier L.W."/>
            <person name="Zody M.C."/>
            <person name="Goldstein S."/>
            <person name="She X."/>
            <person name="Bult C.J."/>
            <person name="Agarwala R."/>
            <person name="Cherry J.L."/>
            <person name="DiCuccio M."/>
            <person name="Hlavina W."/>
            <person name="Kapustin Y."/>
            <person name="Meric P."/>
            <person name="Maglott D."/>
            <person name="Birtle Z."/>
            <person name="Marques A.C."/>
            <person name="Graves T."/>
            <person name="Zhou S."/>
            <person name="Teague B."/>
            <person name="Potamousis K."/>
            <person name="Churas C."/>
            <person name="Place M."/>
            <person name="Herschleb J."/>
            <person name="Runnheim R."/>
            <person name="Forrest D."/>
            <person name="Amos-Landgraf J."/>
            <person name="Schwartz D.C."/>
            <person name="Cheng Z."/>
            <person name="Lindblad-Toh K."/>
            <person name="Eichler E.E."/>
            <person name="Ponting C.P."/>
        </authorList>
    </citation>
    <scope>NUCLEOTIDE SEQUENCE [LARGE SCALE GENOMIC DNA]</scope>
    <source>
        <strain>C57BL/6J</strain>
    </source>
</reference>
<reference key="4">
    <citation type="journal article" date="2013" name="Mol. Cell">
        <title>SIRT5-mediated lysine desuccinylation impacts diverse metabolic pathways.</title>
        <authorList>
            <person name="Park J."/>
            <person name="Chen Y."/>
            <person name="Tishkoff D.X."/>
            <person name="Peng C."/>
            <person name="Tan M."/>
            <person name="Dai L."/>
            <person name="Xie Z."/>
            <person name="Zhang Y."/>
            <person name="Zwaans B.M."/>
            <person name="Skinner M.E."/>
            <person name="Lombard D.B."/>
            <person name="Zhao Y."/>
        </authorList>
    </citation>
    <scope>ACETYLATION [LARGE SCALE ANALYSIS] AT LYS-46</scope>
    <scope>IDENTIFICATION BY MASS SPECTROMETRY [LARGE SCALE ANALYSIS]</scope>
    <source>
        <tissue>Embryonic fibroblast</tissue>
    </source>
</reference>
<reference key="5">
    <citation type="journal article" date="2014" name="Mol. Cell. Proteomics">
        <title>Immunoaffinity enrichment and mass spectrometry analysis of protein methylation.</title>
        <authorList>
            <person name="Guo A."/>
            <person name="Gu H."/>
            <person name="Zhou J."/>
            <person name="Mulhern D."/>
            <person name="Wang Y."/>
            <person name="Lee K.A."/>
            <person name="Yang V."/>
            <person name="Aguiar M."/>
            <person name="Kornhauser J."/>
            <person name="Jia X."/>
            <person name="Ren J."/>
            <person name="Beausoleil S.A."/>
            <person name="Silva J.C."/>
            <person name="Vemulapalli V."/>
            <person name="Bedford M.T."/>
            <person name="Comb M.J."/>
        </authorList>
    </citation>
    <scope>METHYLATION [LARGE SCALE ANALYSIS] AT ARG-909; ARG-981; ARG-1028; ARG-1256 AND ARG-1309</scope>
    <scope>IDENTIFICATION BY MASS SPECTROMETRY [LARGE SCALE ANALYSIS]</scope>
    <source>
        <tissue>Brain</tissue>
        <tissue>Embryo</tissue>
    </source>
</reference>
<comment type="function">
    <text evidence="1">Essential for both cleavage and polyadenylation of pre-mRNA 3' ends.</text>
</comment>
<comment type="subunit">
    <text evidence="1">Component of the cleavage and polyadenylation specificity factor (CPSF) module of the pre-mRNA 3'-end processing complex. Interacts with CPSF3/CPSF73 (By similarity).</text>
</comment>
<comment type="subcellular location">
    <subcellularLocation>
        <location evidence="4">Nucleus</location>
    </subcellularLocation>
</comment>
<comment type="tissue specificity">
    <text evidence="4">Most highly expressed in testis.</text>
</comment>
<comment type="similarity">
    <text evidence="6">Belongs to the WD repeat WDR33 family.</text>
</comment>
<gene>
    <name type="primary">Wdr33</name>
    <name evidence="5" type="synonym">Wdc146</name>
</gene>